<comment type="function">
    <text evidence="1">Makes mgtA transcription sensitive to intracellular proline levels. Under low levels of proline this protein cannot be fully translated, and a stem loop forms which permits transcription of the downstream mgtA gene (By similarity).</text>
</comment>
<comment type="similarity">
    <text evidence="2">Belongs to the MgtL family.</text>
</comment>
<dbReference type="EMBL" id="U00096">
    <property type="protein sequence ID" value="ADO17949.1"/>
    <property type="molecule type" value="Genomic_DNA"/>
</dbReference>
<dbReference type="EMBL" id="AP009048">
    <property type="status" value="NOT_ANNOTATED_CDS"/>
    <property type="molecule type" value="Genomic_DNA"/>
</dbReference>
<dbReference type="RefSeq" id="WP_001387276.1">
    <property type="nucleotide sequence ID" value="NZ_STEB01000013.1"/>
</dbReference>
<dbReference type="RefSeq" id="YP_003933616.1">
    <property type="nucleotide sequence ID" value="NC_000913.3"/>
</dbReference>
<dbReference type="FunCoup" id="E2JKY7">
    <property type="interactions" value="1"/>
</dbReference>
<dbReference type="STRING" id="511145.b4702"/>
<dbReference type="EnsemblBacteria" id="ADO17949">
    <property type="protein sequence ID" value="ADO17949"/>
    <property type="gene ID" value="b4702"/>
</dbReference>
<dbReference type="GeneID" id="93777583"/>
<dbReference type="GeneID" id="9797237"/>
<dbReference type="KEGG" id="eco:b4702"/>
<dbReference type="InParanoid" id="E2JKY7"/>
<dbReference type="BioCyc" id="EcoCyc:MONOMER0-4201"/>
<dbReference type="PRO" id="PR:E2JKY7"/>
<dbReference type="Proteomes" id="UP000000625">
    <property type="component" value="Chromosome"/>
</dbReference>
<dbReference type="GO" id="GO:0032026">
    <property type="term" value="P:response to magnesium ion"/>
    <property type="evidence" value="ECO:0000314"/>
    <property type="project" value="EcoCyc"/>
</dbReference>
<dbReference type="GO" id="GO:0031556">
    <property type="term" value="P:transcriptional attenuation by ribosome"/>
    <property type="evidence" value="ECO:0000270"/>
    <property type="project" value="EcoCyc"/>
</dbReference>
<dbReference type="InterPro" id="IPR031434">
    <property type="entry name" value="MGTL"/>
</dbReference>
<dbReference type="Pfam" id="PF17059">
    <property type="entry name" value="MGTL"/>
    <property type="match status" value="1"/>
</dbReference>
<name>LPMG_ECOLI</name>
<gene>
    <name type="primary">mgtL</name>
    <name type="ordered locus">b4702</name>
    <name type="ordered locus">JW4200.1</name>
</gene>
<feature type="chain" id="PRO_0000403451" description="mgtA leader peptide">
    <location>
        <begin position="1"/>
        <end position="17"/>
    </location>
</feature>
<organism>
    <name type="scientific">Escherichia coli (strain K12)</name>
    <dbReference type="NCBI Taxonomy" id="83333"/>
    <lineage>
        <taxon>Bacteria</taxon>
        <taxon>Pseudomonadati</taxon>
        <taxon>Pseudomonadota</taxon>
        <taxon>Gammaproteobacteria</taxon>
        <taxon>Enterobacterales</taxon>
        <taxon>Enterobacteriaceae</taxon>
        <taxon>Escherichia</taxon>
    </lineage>
</organism>
<proteinExistence type="inferred from homology"/>
<sequence length="17" mass="2123">MEPDPTPLPRRRLKLFR</sequence>
<protein>
    <recommendedName>
        <fullName>mgtA leader peptide</fullName>
    </recommendedName>
    <alternativeName>
        <fullName>Regulatory leader peptide for mgtA</fullName>
    </alternativeName>
</protein>
<reference key="1">
    <citation type="journal article" date="1997" name="Science">
        <title>The complete genome sequence of Escherichia coli K-12.</title>
        <authorList>
            <person name="Blattner F.R."/>
            <person name="Plunkett G. III"/>
            <person name="Bloch C.A."/>
            <person name="Perna N.T."/>
            <person name="Burland V."/>
            <person name="Riley M."/>
            <person name="Collado-Vides J."/>
            <person name="Glasner J.D."/>
            <person name="Rode C.K."/>
            <person name="Mayhew G.F."/>
            <person name="Gregor J."/>
            <person name="Davis N.W."/>
            <person name="Kirkpatrick H.A."/>
            <person name="Goeden M.A."/>
            <person name="Rose D.J."/>
            <person name="Mau B."/>
            <person name="Shao Y."/>
        </authorList>
    </citation>
    <scope>NUCLEOTIDE SEQUENCE [LARGE SCALE GENOMIC DNA]</scope>
    <source>
        <strain>K12 / MG1655 / ATCC 47076</strain>
    </source>
</reference>
<reference key="2">
    <citation type="journal article" date="2006" name="Mol. Syst. Biol.">
        <title>Highly accurate genome sequences of Escherichia coli K-12 strains MG1655 and W3110.</title>
        <authorList>
            <person name="Hayashi K."/>
            <person name="Morooka N."/>
            <person name="Yamamoto Y."/>
            <person name="Fujita K."/>
            <person name="Isono K."/>
            <person name="Choi S."/>
            <person name="Ohtsubo E."/>
            <person name="Baba T."/>
            <person name="Wanner B.L."/>
            <person name="Mori H."/>
            <person name="Horiuchi T."/>
        </authorList>
    </citation>
    <scope>NUCLEOTIDE SEQUENCE [LARGE SCALE GENOMIC DNA]</scope>
    <source>
        <strain>K12 / W3110 / ATCC 27325 / DSM 5911</strain>
    </source>
</reference>
<accession>E2JKY7</accession>
<keyword id="KW-0428">Leader peptide</keyword>
<keyword id="KW-1185">Reference proteome</keyword>
<evidence type="ECO:0000250" key="1"/>
<evidence type="ECO:0000305" key="2"/>